<evidence type="ECO:0000256" key="1">
    <source>
        <dbReference type="SAM" id="MobiDB-lite"/>
    </source>
</evidence>
<evidence type="ECO:0000269" key="2">
    <source>
    </source>
</evidence>
<evidence type="ECO:0000269" key="3">
    <source>
    </source>
</evidence>
<evidence type="ECO:0000269" key="4">
    <source>
    </source>
</evidence>
<evidence type="ECO:0000305" key="5"/>
<organism>
    <name type="scientific">Saccharomyces cerevisiae (strain ATCC 204508 / S288c)</name>
    <name type="common">Baker's yeast</name>
    <dbReference type="NCBI Taxonomy" id="559292"/>
    <lineage>
        <taxon>Eukaryota</taxon>
        <taxon>Fungi</taxon>
        <taxon>Dikarya</taxon>
        <taxon>Ascomycota</taxon>
        <taxon>Saccharomycotina</taxon>
        <taxon>Saccharomycetes</taxon>
        <taxon>Saccharomycetales</taxon>
        <taxon>Saccharomycetaceae</taxon>
        <taxon>Saccharomyces</taxon>
    </lineage>
</organism>
<proteinExistence type="evidence at protein level"/>
<keyword id="KW-0002">3D-structure</keyword>
<keyword id="KW-0067">ATP-binding</keyword>
<keyword id="KW-0418">Kinase</keyword>
<keyword id="KW-0547">Nucleotide-binding</keyword>
<keyword id="KW-0539">Nucleus</keyword>
<keyword id="KW-1185">Reference proteome</keyword>
<keyword id="KW-0698">rRNA processing</keyword>
<keyword id="KW-0808">Transferase</keyword>
<name>GRC3_YEAST</name>
<protein>
    <recommendedName>
        <fullName>Polynucleotide 5'-hydroxyl-kinase GRC3</fullName>
        <ecNumber>2.7.1.-</ecNumber>
    </recommendedName>
    <alternativeName>
        <fullName>Protein GRC3</fullName>
    </alternativeName>
</protein>
<gene>
    <name type="primary">GRC3</name>
    <name type="ordered locus">YLL035W</name>
</gene>
<comment type="function">
    <text evidence="3 4">Polynucleotide 5'-kinase involved in rRNA processing. Required for the efficient termination by RNA polymerase I and the processing of the IST2 pre-rRNA internal transcribed spacer localized between the 5.8S and 25S rRNAs. May act by maintaining the phosphorylated status of the downstream RNT1 cleavage product, which in turn allows the torpedo activity of RAT1 to efficiently terminate Pol I transcription. In vitro, displays polynucleotide kinase activity on both single- and double-stranded RNA and on single-stranded DNA alone, but not double-stranded DNA alone.</text>
</comment>
<comment type="interaction">
    <interactant intactId="EBI-3741923">
        <id>Q07845</id>
    </interactant>
    <interactant intactId="EBI-10053">
        <id>P36146</id>
        <label>LAS1</label>
    </interactant>
    <organismsDiffer>false</organismsDiffer>
    <experiments>6</experiments>
</comment>
<comment type="subcellular location">
    <subcellularLocation>
        <location evidence="4">Nucleus</location>
        <location evidence="4">Nucleolus</location>
    </subcellularLocation>
    <text>Associates with rDNA.</text>
</comment>
<comment type="induction">
    <text evidence="2">Cell cycle-regulated with a peak of transcription at the G1/S boundary.</text>
</comment>
<comment type="similarity">
    <text evidence="5">Belongs to the Clp1 family. NOL9/GRC3 subfamily.</text>
</comment>
<comment type="sequence caution" evidence="5">
    <conflict type="frameshift">
        <sequence resource="EMBL-CDS" id="CAA57511"/>
    </conflict>
</comment>
<accession>Q07845</accession>
<accession>D6VXX0</accession>
<accession>Q9P4W6</accession>
<sequence length="632" mass="72258">MVIDSKQDLPQYTKDSGSESDSDSSNNFIVESPSIPSSKSATVVLNSEEYEDDEGDDLNGLDAELIDNITYEGDEDETMFVGLKEKQKLHLSGVFRLQVVKGGIVYNNVHYNASREILTFWHPLSQSIPTIDFSHFAGWQDTFFMPRNNRFKIRDEEFKSFPCVLRVFNSNHTGLLEAGHLYRDVNYLWKPKEPYFPLNERTTYHLLHESDRIQSLSVPGYWSTPLEKLYLSHKNAAYDTRIMVIGGKNSGKSTFLRLLLEKFTQDIRDSTTSQEELVYLDLDPGQPEYSLPDSISLNKILSSPISLGQHLCQGSNFQTLLQFYAGSSSPQDEPTSYLNCADKLIDHLEEQAFFGTSLLNLPGWIKGFGMQILNHIIRKYKPTHLLFLETANSKRHLDELTIPQSFSTSLRDAYAPEVVRVPAHSLNHTLSSRFHASQLRTFKILALFHKITQFDYDFAPLLKSAPLQISYGKGKSGIKGIQFPMEFQDLNPQDIKSALEGTVIGIYTYSGEDSLEVKSLNTFPILQSCTSSSKNFITLGLIHSIDTSQQIMNIYVPPCHTQILDKQPEDAQWIIVRNKTETPFCDFLPSPRTITWDDNIQIPFATFERRKKLEHVWKVRKNVMRRGQFMKR</sequence>
<dbReference type="EC" id="2.7.1.-"/>
<dbReference type="EMBL" id="Z73140">
    <property type="protein sequence ID" value="CAA97484.1"/>
    <property type="molecule type" value="Genomic_DNA"/>
</dbReference>
<dbReference type="EMBL" id="X81985">
    <property type="protein sequence ID" value="CAA57511.1"/>
    <property type="status" value="ALT_FRAME"/>
    <property type="molecule type" value="Genomic_DNA"/>
</dbReference>
<dbReference type="EMBL" id="BK006945">
    <property type="protein sequence ID" value="DAA09286.1"/>
    <property type="molecule type" value="Genomic_DNA"/>
</dbReference>
<dbReference type="PIR" id="S64786">
    <property type="entry name" value="S64786"/>
</dbReference>
<dbReference type="RefSeq" id="NP_013065.1">
    <property type="nucleotide sequence ID" value="NM_001181855.1"/>
</dbReference>
<dbReference type="PDB" id="7Y18">
    <property type="method" value="X-ray"/>
    <property type="resolution" value="3.69 A"/>
    <property type="chains" value="A/B/E=1-632"/>
</dbReference>
<dbReference type="PDB" id="8J5Y">
    <property type="method" value="EM"/>
    <property type="resolution" value="3.07 A"/>
    <property type="chains" value="A/B=1-632"/>
</dbReference>
<dbReference type="PDBsum" id="7Y18"/>
<dbReference type="PDBsum" id="8J5Y"/>
<dbReference type="SMR" id="Q07845"/>
<dbReference type="BioGRID" id="31218">
    <property type="interactions" value="213"/>
</dbReference>
<dbReference type="ComplexPortal" id="CPX-3384">
    <property type="entry name" value="LAS1 RNA processome complex"/>
</dbReference>
<dbReference type="FunCoup" id="Q07845">
    <property type="interactions" value="177"/>
</dbReference>
<dbReference type="IntAct" id="Q07845">
    <property type="interactions" value="2"/>
</dbReference>
<dbReference type="STRING" id="4932.YLL035W"/>
<dbReference type="iPTMnet" id="Q07845"/>
<dbReference type="PaxDb" id="4932-YLL035W"/>
<dbReference type="PeptideAtlas" id="Q07845"/>
<dbReference type="EnsemblFungi" id="YLL035W_mRNA">
    <property type="protein sequence ID" value="YLL035W"/>
    <property type="gene ID" value="YLL035W"/>
</dbReference>
<dbReference type="GeneID" id="850624"/>
<dbReference type="KEGG" id="sce:YLL035W"/>
<dbReference type="AGR" id="SGD:S000003958"/>
<dbReference type="SGD" id="S000003958">
    <property type="gene designation" value="GRC3"/>
</dbReference>
<dbReference type="VEuPathDB" id="FungiDB:YLL035W"/>
<dbReference type="eggNOG" id="KOG2750">
    <property type="taxonomic scope" value="Eukaryota"/>
</dbReference>
<dbReference type="GeneTree" id="ENSGT00940000153668"/>
<dbReference type="HOGENOM" id="CLU_010345_1_1_1"/>
<dbReference type="InParanoid" id="Q07845"/>
<dbReference type="OMA" id="EHVWKVR"/>
<dbReference type="OrthoDB" id="4054781at2759"/>
<dbReference type="BioCyc" id="YEAST:G3O-32138-MONOMER"/>
<dbReference type="Reactome" id="R-SCE-6791226">
    <property type="pathway name" value="Major pathway of rRNA processing in the nucleolus and cytosol"/>
</dbReference>
<dbReference type="BioGRID-ORCS" id="850624">
    <property type="hits" value="7 hits in 10 CRISPR screens"/>
</dbReference>
<dbReference type="PRO" id="PR:Q07845"/>
<dbReference type="Proteomes" id="UP000002311">
    <property type="component" value="Chromosome XII"/>
</dbReference>
<dbReference type="RNAct" id="Q07845">
    <property type="molecule type" value="protein"/>
</dbReference>
<dbReference type="GO" id="GO:0090730">
    <property type="term" value="C:Las1 complex"/>
    <property type="evidence" value="ECO:0000353"/>
    <property type="project" value="ComplexPortal"/>
</dbReference>
<dbReference type="GO" id="GO:0030874">
    <property type="term" value="C:nucleolar chromatin"/>
    <property type="evidence" value="ECO:0000353"/>
    <property type="project" value="SGD"/>
</dbReference>
<dbReference type="GO" id="GO:0005634">
    <property type="term" value="C:nucleus"/>
    <property type="evidence" value="ECO:0000318"/>
    <property type="project" value="GO_Central"/>
</dbReference>
<dbReference type="GO" id="GO:0005524">
    <property type="term" value="F:ATP binding"/>
    <property type="evidence" value="ECO:0007669"/>
    <property type="project" value="UniProtKB-KW"/>
</dbReference>
<dbReference type="GO" id="GO:0051731">
    <property type="term" value="F:polynucleotide 5'-hydroxyl-kinase activity"/>
    <property type="evidence" value="ECO:0000314"/>
    <property type="project" value="SGD"/>
</dbReference>
<dbReference type="GO" id="GO:0000448">
    <property type="term" value="P:cleavage in ITS2 between 5.8S rRNA and LSU-rRNA of tricistronic rRNA transcript (SSU-rRNA, 5.8S rRNA, LSU-rRNA)"/>
    <property type="evidence" value="ECO:0000314"/>
    <property type="project" value="SGD"/>
</dbReference>
<dbReference type="GO" id="GO:0006364">
    <property type="term" value="P:rRNA processing"/>
    <property type="evidence" value="ECO:0000315"/>
    <property type="project" value="SGD"/>
</dbReference>
<dbReference type="GO" id="GO:0006363">
    <property type="term" value="P:termination of RNA polymerase I transcription"/>
    <property type="evidence" value="ECO:0000315"/>
    <property type="project" value="SGD"/>
</dbReference>
<dbReference type="FunFam" id="3.40.50.300:FF:002306">
    <property type="entry name" value="Grc3p"/>
    <property type="match status" value="1"/>
</dbReference>
<dbReference type="Gene3D" id="3.40.50.300">
    <property type="entry name" value="P-loop containing nucleotide triphosphate hydrolases"/>
    <property type="match status" value="1"/>
</dbReference>
<dbReference type="InterPro" id="IPR045116">
    <property type="entry name" value="Clp1/Grc3"/>
</dbReference>
<dbReference type="InterPro" id="IPR032319">
    <property type="entry name" value="CLP1_P"/>
</dbReference>
<dbReference type="InterPro" id="IPR027417">
    <property type="entry name" value="P-loop_NTPase"/>
</dbReference>
<dbReference type="PANTHER" id="PTHR12755">
    <property type="entry name" value="CLEAVAGE/POLYADENYLATION FACTOR IA SUBUNIT CLP1P"/>
    <property type="match status" value="1"/>
</dbReference>
<dbReference type="PANTHER" id="PTHR12755:SF3">
    <property type="entry name" value="POLYNUCLEOTIDE 5'-HYDROXYL-KINASE NOL9"/>
    <property type="match status" value="1"/>
</dbReference>
<dbReference type="Pfam" id="PF16575">
    <property type="entry name" value="CLP1_P"/>
    <property type="match status" value="1"/>
</dbReference>
<reference key="1">
    <citation type="journal article" date="1997" name="Nature">
        <title>The nucleotide sequence of Saccharomyces cerevisiae chromosome XII.</title>
        <authorList>
            <person name="Johnston M."/>
            <person name="Hillier L.W."/>
            <person name="Riles L."/>
            <person name="Albermann K."/>
            <person name="Andre B."/>
            <person name="Ansorge W."/>
            <person name="Benes V."/>
            <person name="Brueckner M."/>
            <person name="Delius H."/>
            <person name="Dubois E."/>
            <person name="Duesterhoeft A."/>
            <person name="Entian K.-D."/>
            <person name="Floeth M."/>
            <person name="Goffeau A."/>
            <person name="Hebling U."/>
            <person name="Heumann K."/>
            <person name="Heuss-Neitzel D."/>
            <person name="Hilbert H."/>
            <person name="Hilger F."/>
            <person name="Kleine K."/>
            <person name="Koetter P."/>
            <person name="Louis E.J."/>
            <person name="Messenguy F."/>
            <person name="Mewes H.-W."/>
            <person name="Miosga T."/>
            <person name="Moestl D."/>
            <person name="Mueller-Auer S."/>
            <person name="Nentwich U."/>
            <person name="Obermaier B."/>
            <person name="Piravandi E."/>
            <person name="Pohl T.M."/>
            <person name="Portetelle D."/>
            <person name="Purnelle B."/>
            <person name="Rechmann S."/>
            <person name="Rieger M."/>
            <person name="Rinke M."/>
            <person name="Rose M."/>
            <person name="Scharfe M."/>
            <person name="Scherens B."/>
            <person name="Scholler P."/>
            <person name="Schwager C."/>
            <person name="Schwarz S."/>
            <person name="Underwood A.P."/>
            <person name="Urrestarazu L.A."/>
            <person name="Vandenbol M."/>
            <person name="Verhasselt P."/>
            <person name="Vierendeels F."/>
            <person name="Voet M."/>
            <person name="Volckaert G."/>
            <person name="Voss H."/>
            <person name="Wambutt R."/>
            <person name="Wedler E."/>
            <person name="Wedler H."/>
            <person name="Zimmermann F.K."/>
            <person name="Zollner A."/>
            <person name="Hani J."/>
            <person name="Hoheisel J.D."/>
        </authorList>
    </citation>
    <scope>NUCLEOTIDE SEQUENCE [LARGE SCALE GENOMIC DNA]</scope>
    <source>
        <strain>ATCC 204508 / S288c</strain>
    </source>
</reference>
<reference key="2">
    <citation type="journal article" date="2014" name="G3 (Bethesda)">
        <title>The reference genome sequence of Saccharomyces cerevisiae: Then and now.</title>
        <authorList>
            <person name="Engel S.R."/>
            <person name="Dietrich F.S."/>
            <person name="Fisk D.G."/>
            <person name="Binkley G."/>
            <person name="Balakrishnan R."/>
            <person name="Costanzo M.C."/>
            <person name="Dwight S.S."/>
            <person name="Hitz B.C."/>
            <person name="Karra K."/>
            <person name="Nash R.S."/>
            <person name="Weng S."/>
            <person name="Wong E.D."/>
            <person name="Lloyd P."/>
            <person name="Skrzypek M.S."/>
            <person name="Miyasato S.R."/>
            <person name="Simison M."/>
            <person name="Cherry J.M."/>
        </authorList>
    </citation>
    <scope>GENOME REANNOTATION</scope>
    <source>
        <strain>ATCC 204508 / S288c</strain>
    </source>
</reference>
<reference key="3">
    <citation type="submission" date="1994-09" db="EMBL/GenBank/DDBJ databases">
        <authorList>
            <person name="Dallinger G."/>
        </authorList>
    </citation>
    <scope>NUCLEOTIDE SEQUENCE [GENOMIC DNA] OF 401-598</scope>
</reference>
<reference key="4">
    <citation type="journal article" date="2000" name="Yeast">
        <title>Functional analysis of six novel ORFs on the left arm of chromosome XII in Saccharomyces cerevisiae reveals two essential genes, one of which is under cell-cycle control.</title>
        <authorList>
            <person name="El-Moghazy A.-N."/>
            <person name="Zhang N."/>
            <person name="Ismail T."/>
            <person name="Wu J."/>
            <person name="Butt A."/>
            <person name="Ahmed Khan S."/>
            <person name="Merlotti C."/>
            <person name="Cara Woodwark K."/>
            <person name="Gardner D.C.J."/>
            <person name="Gaskell S.J."/>
            <person name="Oliver S.G."/>
        </authorList>
    </citation>
    <scope>INDUCTION</scope>
</reference>
<reference key="5">
    <citation type="journal article" date="2003" name="Cell">
        <title>A panoramic view of yeast noncoding RNA processing.</title>
        <authorList>
            <person name="Peng W.-T."/>
            <person name="Robinson M.D."/>
            <person name="Mnaimneh S."/>
            <person name="Krogan N.J."/>
            <person name="Cagney G."/>
            <person name="Morris Q.D."/>
            <person name="Davierwala A.P."/>
            <person name="Grigull J."/>
            <person name="Yang X."/>
            <person name="Zhang W."/>
            <person name="Mitsakakis N."/>
            <person name="Ryan O.W."/>
            <person name="Datta N."/>
            <person name="Jojic V."/>
            <person name="Pal C."/>
            <person name="Canadien V."/>
            <person name="Richards D.P."/>
            <person name="Beattie B."/>
            <person name="Wu L.F."/>
            <person name="Altschuler S.J."/>
            <person name="Roweis S."/>
            <person name="Frey B.J."/>
            <person name="Emili A."/>
            <person name="Greenblatt J.F."/>
            <person name="Hughes T.R."/>
        </authorList>
    </citation>
    <scope>FUNCTION</scope>
</reference>
<reference key="6">
    <citation type="journal article" date="2010" name="EMBO Rep.">
        <title>Role of the RNA/DNA kinase Grc3 in transcription termination by RNA polymerase I.</title>
        <authorList>
            <person name="Braglia P."/>
            <person name="Heindl K."/>
            <person name="Schleiffer A."/>
            <person name="Martinez J."/>
            <person name="Proudfoot N.J."/>
        </authorList>
    </citation>
    <scope>FUNCTION</scope>
    <scope>SUBCELLULAR LOCATION</scope>
    <scope>MUTAGENESIS OF LYS-252 AND SER-253</scope>
</reference>
<feature type="chain" id="PRO_0000087597" description="Polynucleotide 5'-hydroxyl-kinase GRC3">
    <location>
        <begin position="1"/>
        <end position="632"/>
    </location>
</feature>
<feature type="region of interest" description="Disordered" evidence="1">
    <location>
        <begin position="1"/>
        <end position="42"/>
    </location>
</feature>
<feature type="compositionally biased region" description="Polar residues" evidence="1">
    <location>
        <begin position="26"/>
        <end position="42"/>
    </location>
</feature>
<feature type="binding site" evidence="5">
    <location>
        <begin position="246"/>
        <end position="253"/>
    </location>
    <ligand>
        <name>ATP</name>
        <dbReference type="ChEBI" id="CHEBI:30616"/>
    </ligand>
</feature>
<feature type="mutagenesis site" description="Abolishes kinase activity and termination by RNA polymerase I." evidence="4">
    <original>K</original>
    <variation>A</variation>
    <location>
        <position position="252"/>
    </location>
</feature>
<feature type="mutagenesis site" description="Abolishes kinase activity and termination by RNA polymerase I." evidence="4">
    <original>S</original>
    <variation>A</variation>
    <location>
        <position position="253"/>
    </location>
</feature>